<accession>A8A5A1</accession>
<name>RS4_ECOHS</name>
<comment type="function">
    <text evidence="1">One of the primary rRNA binding proteins, it binds directly to 16S rRNA where it nucleates assembly of the body of the 30S subunit.</text>
</comment>
<comment type="function">
    <text evidence="1">With S5 and S12 plays an important role in translational accuracy.</text>
</comment>
<comment type="subunit">
    <text evidence="1">Part of the 30S ribosomal subunit. Contacts protein S5. The interaction surface between S4 and S5 is involved in control of translational fidelity.</text>
</comment>
<comment type="similarity">
    <text evidence="1">Belongs to the universal ribosomal protein uS4 family.</text>
</comment>
<organism>
    <name type="scientific">Escherichia coli O9:H4 (strain HS)</name>
    <dbReference type="NCBI Taxonomy" id="331112"/>
    <lineage>
        <taxon>Bacteria</taxon>
        <taxon>Pseudomonadati</taxon>
        <taxon>Pseudomonadota</taxon>
        <taxon>Gammaproteobacteria</taxon>
        <taxon>Enterobacterales</taxon>
        <taxon>Enterobacteriaceae</taxon>
        <taxon>Escherichia</taxon>
    </lineage>
</organism>
<reference key="1">
    <citation type="journal article" date="2008" name="J. Bacteriol.">
        <title>The pangenome structure of Escherichia coli: comparative genomic analysis of E. coli commensal and pathogenic isolates.</title>
        <authorList>
            <person name="Rasko D.A."/>
            <person name="Rosovitz M.J."/>
            <person name="Myers G.S.A."/>
            <person name="Mongodin E.F."/>
            <person name="Fricke W.F."/>
            <person name="Gajer P."/>
            <person name="Crabtree J."/>
            <person name="Sebaihia M."/>
            <person name="Thomson N.R."/>
            <person name="Chaudhuri R."/>
            <person name="Henderson I.R."/>
            <person name="Sperandio V."/>
            <person name="Ravel J."/>
        </authorList>
    </citation>
    <scope>NUCLEOTIDE SEQUENCE [LARGE SCALE GENOMIC DNA]</scope>
    <source>
        <strain>HS</strain>
    </source>
</reference>
<protein>
    <recommendedName>
        <fullName evidence="1">Small ribosomal subunit protein uS4</fullName>
    </recommendedName>
    <alternativeName>
        <fullName evidence="2">30S ribosomal protein S4</fullName>
    </alternativeName>
</protein>
<evidence type="ECO:0000255" key="1">
    <source>
        <dbReference type="HAMAP-Rule" id="MF_01306"/>
    </source>
</evidence>
<evidence type="ECO:0000305" key="2"/>
<keyword id="KW-0687">Ribonucleoprotein</keyword>
<keyword id="KW-0689">Ribosomal protein</keyword>
<keyword id="KW-0694">RNA-binding</keyword>
<keyword id="KW-0699">rRNA-binding</keyword>
<dbReference type="EMBL" id="CP000802">
    <property type="protein sequence ID" value="ABV07705.1"/>
    <property type="molecule type" value="Genomic_DNA"/>
</dbReference>
<dbReference type="RefSeq" id="WP_000135224.1">
    <property type="nucleotide sequence ID" value="NC_009800.1"/>
</dbReference>
<dbReference type="SMR" id="A8A5A1"/>
<dbReference type="GeneID" id="93778691"/>
<dbReference type="KEGG" id="ecx:EcHS_A3490"/>
<dbReference type="HOGENOM" id="CLU_092403_0_2_6"/>
<dbReference type="GO" id="GO:0015935">
    <property type="term" value="C:small ribosomal subunit"/>
    <property type="evidence" value="ECO:0007669"/>
    <property type="project" value="InterPro"/>
</dbReference>
<dbReference type="GO" id="GO:0019843">
    <property type="term" value="F:rRNA binding"/>
    <property type="evidence" value="ECO:0007669"/>
    <property type="project" value="UniProtKB-UniRule"/>
</dbReference>
<dbReference type="GO" id="GO:0003735">
    <property type="term" value="F:structural constituent of ribosome"/>
    <property type="evidence" value="ECO:0007669"/>
    <property type="project" value="InterPro"/>
</dbReference>
<dbReference type="GO" id="GO:0042274">
    <property type="term" value="P:ribosomal small subunit biogenesis"/>
    <property type="evidence" value="ECO:0007669"/>
    <property type="project" value="TreeGrafter"/>
</dbReference>
<dbReference type="GO" id="GO:0006412">
    <property type="term" value="P:translation"/>
    <property type="evidence" value="ECO:0007669"/>
    <property type="project" value="UniProtKB-UniRule"/>
</dbReference>
<dbReference type="CDD" id="cd00165">
    <property type="entry name" value="S4"/>
    <property type="match status" value="1"/>
</dbReference>
<dbReference type="FunFam" id="1.10.1050.10:FF:000001">
    <property type="entry name" value="30S ribosomal protein S4"/>
    <property type="match status" value="1"/>
</dbReference>
<dbReference type="FunFam" id="3.10.290.10:FF:000001">
    <property type="entry name" value="30S ribosomal protein S4"/>
    <property type="match status" value="1"/>
</dbReference>
<dbReference type="Gene3D" id="1.10.1050.10">
    <property type="entry name" value="Ribosomal Protein S4 Delta 41, Chain A, domain 1"/>
    <property type="match status" value="1"/>
</dbReference>
<dbReference type="Gene3D" id="3.10.290.10">
    <property type="entry name" value="RNA-binding S4 domain"/>
    <property type="match status" value="1"/>
</dbReference>
<dbReference type="HAMAP" id="MF_01306_B">
    <property type="entry name" value="Ribosomal_uS4_B"/>
    <property type="match status" value="1"/>
</dbReference>
<dbReference type="InterPro" id="IPR022801">
    <property type="entry name" value="Ribosomal_uS4"/>
</dbReference>
<dbReference type="InterPro" id="IPR005709">
    <property type="entry name" value="Ribosomal_uS4_bac-type"/>
</dbReference>
<dbReference type="InterPro" id="IPR018079">
    <property type="entry name" value="Ribosomal_uS4_CS"/>
</dbReference>
<dbReference type="InterPro" id="IPR001912">
    <property type="entry name" value="Ribosomal_uS4_N"/>
</dbReference>
<dbReference type="InterPro" id="IPR002942">
    <property type="entry name" value="S4_RNA-bd"/>
</dbReference>
<dbReference type="InterPro" id="IPR036986">
    <property type="entry name" value="S4_RNA-bd_sf"/>
</dbReference>
<dbReference type="NCBIfam" id="NF003717">
    <property type="entry name" value="PRK05327.1"/>
    <property type="match status" value="1"/>
</dbReference>
<dbReference type="NCBIfam" id="TIGR01017">
    <property type="entry name" value="rpsD_bact"/>
    <property type="match status" value="1"/>
</dbReference>
<dbReference type="PANTHER" id="PTHR11831">
    <property type="entry name" value="30S 40S RIBOSOMAL PROTEIN"/>
    <property type="match status" value="1"/>
</dbReference>
<dbReference type="PANTHER" id="PTHR11831:SF4">
    <property type="entry name" value="SMALL RIBOSOMAL SUBUNIT PROTEIN US4M"/>
    <property type="match status" value="1"/>
</dbReference>
<dbReference type="Pfam" id="PF00163">
    <property type="entry name" value="Ribosomal_S4"/>
    <property type="match status" value="1"/>
</dbReference>
<dbReference type="Pfam" id="PF01479">
    <property type="entry name" value="S4"/>
    <property type="match status" value="1"/>
</dbReference>
<dbReference type="SMART" id="SM01390">
    <property type="entry name" value="Ribosomal_S4"/>
    <property type="match status" value="1"/>
</dbReference>
<dbReference type="SMART" id="SM00363">
    <property type="entry name" value="S4"/>
    <property type="match status" value="1"/>
</dbReference>
<dbReference type="SUPFAM" id="SSF55174">
    <property type="entry name" value="Alpha-L RNA-binding motif"/>
    <property type="match status" value="1"/>
</dbReference>
<dbReference type="PROSITE" id="PS00632">
    <property type="entry name" value="RIBOSOMAL_S4"/>
    <property type="match status" value="1"/>
</dbReference>
<dbReference type="PROSITE" id="PS50889">
    <property type="entry name" value="S4"/>
    <property type="match status" value="1"/>
</dbReference>
<feature type="chain" id="PRO_0000322298" description="Small ribosomal subunit protein uS4">
    <location>
        <begin position="1"/>
        <end position="206"/>
    </location>
</feature>
<feature type="domain" description="S4 RNA-binding" evidence="1">
    <location>
        <begin position="96"/>
        <end position="156"/>
    </location>
</feature>
<gene>
    <name evidence="1" type="primary">rpsD</name>
    <name type="ordered locus">EcHS_A3490</name>
</gene>
<proteinExistence type="inferred from homology"/>
<sequence length="206" mass="23469">MARYLGPKLKLSRREGTDLFLKSGVRAIDTKCKIEQAPGQHGARKPRLSDYGVQLREKQKVRRIYGVLERQFRNYYKEAARLKGNTGENLLALLEGRLDNVVYRMGFGATRAEARQLVSHKAIMVNGRVVNIASYQVSPNDVVSIREKAKKQSRVKAALELAEQREKPTWLEVDAGKMEGTFKRKPERSDLSADINEHLIVELYSK</sequence>